<reference key="1">
    <citation type="journal article" date="1999" name="DNA Res.">
        <title>Structural analysis of Arabidopsis thaliana chromosome 5. IX. Sequence features of the regions of 1,011,550 bp covered by seventeen P1 and TAC clones.</title>
        <authorList>
            <person name="Kaneko T."/>
            <person name="Katoh T."/>
            <person name="Sato S."/>
            <person name="Nakamura Y."/>
            <person name="Asamizu E."/>
            <person name="Kotani H."/>
            <person name="Miyajima N."/>
            <person name="Tabata S."/>
        </authorList>
    </citation>
    <scope>NUCLEOTIDE SEQUENCE [LARGE SCALE GENOMIC DNA]</scope>
    <source>
        <strain>cv. Columbia</strain>
    </source>
</reference>
<reference key="2">
    <citation type="journal article" date="2017" name="Plant J.">
        <title>Araport11: a complete reannotation of the Arabidopsis thaliana reference genome.</title>
        <authorList>
            <person name="Cheng C.Y."/>
            <person name="Krishnakumar V."/>
            <person name="Chan A.P."/>
            <person name="Thibaud-Nissen F."/>
            <person name="Schobel S."/>
            <person name="Town C.D."/>
        </authorList>
    </citation>
    <scope>GENOME REANNOTATION</scope>
    <source>
        <strain>cv. Columbia</strain>
    </source>
</reference>
<reference key="3">
    <citation type="journal article" date="2003" name="Science">
        <title>Empirical analysis of transcriptional activity in the Arabidopsis genome.</title>
        <authorList>
            <person name="Yamada K."/>
            <person name="Lim J."/>
            <person name="Dale J.M."/>
            <person name="Chen H."/>
            <person name="Shinn P."/>
            <person name="Palm C.J."/>
            <person name="Southwick A.M."/>
            <person name="Wu H.C."/>
            <person name="Kim C.J."/>
            <person name="Nguyen M."/>
            <person name="Pham P.K."/>
            <person name="Cheuk R.F."/>
            <person name="Karlin-Newmann G."/>
            <person name="Liu S.X."/>
            <person name="Lam B."/>
            <person name="Sakano H."/>
            <person name="Wu T."/>
            <person name="Yu G."/>
            <person name="Miranda M."/>
            <person name="Quach H.L."/>
            <person name="Tripp M."/>
            <person name="Chang C.H."/>
            <person name="Lee J.M."/>
            <person name="Toriumi M.J."/>
            <person name="Chan M.M."/>
            <person name="Tang C.C."/>
            <person name="Onodera C.S."/>
            <person name="Deng J.M."/>
            <person name="Akiyama K."/>
            <person name="Ansari Y."/>
            <person name="Arakawa T."/>
            <person name="Banh J."/>
            <person name="Banno F."/>
            <person name="Bowser L."/>
            <person name="Brooks S.Y."/>
            <person name="Carninci P."/>
            <person name="Chao Q."/>
            <person name="Choy N."/>
            <person name="Enju A."/>
            <person name="Goldsmith A.D."/>
            <person name="Gurjal M."/>
            <person name="Hansen N.F."/>
            <person name="Hayashizaki Y."/>
            <person name="Johnson-Hopson C."/>
            <person name="Hsuan V.W."/>
            <person name="Iida K."/>
            <person name="Karnes M."/>
            <person name="Khan S."/>
            <person name="Koesema E."/>
            <person name="Ishida J."/>
            <person name="Jiang P.X."/>
            <person name="Jones T."/>
            <person name="Kawai J."/>
            <person name="Kamiya A."/>
            <person name="Meyers C."/>
            <person name="Nakajima M."/>
            <person name="Narusaka M."/>
            <person name="Seki M."/>
            <person name="Sakurai T."/>
            <person name="Satou M."/>
            <person name="Tamse R."/>
            <person name="Vaysberg M."/>
            <person name="Wallender E.K."/>
            <person name="Wong C."/>
            <person name="Yamamura Y."/>
            <person name="Yuan S."/>
            <person name="Shinozaki K."/>
            <person name="Davis R.W."/>
            <person name="Theologis A."/>
            <person name="Ecker J.R."/>
        </authorList>
    </citation>
    <scope>NUCLEOTIDE SEQUENCE [LARGE SCALE MRNA]</scope>
    <source>
        <strain>cv. Columbia</strain>
    </source>
</reference>
<reference key="4">
    <citation type="submission" date="2002-03" db="EMBL/GenBank/DDBJ databases">
        <title>Full-length cDNA from Arabidopsis thaliana.</title>
        <authorList>
            <person name="Brover V.V."/>
            <person name="Troukhan M.E."/>
            <person name="Alexandrov N.A."/>
            <person name="Lu Y.-P."/>
            <person name="Flavell R.B."/>
            <person name="Feldmann K.A."/>
        </authorList>
    </citation>
    <scope>NUCLEOTIDE SEQUENCE [LARGE SCALE MRNA]</scope>
</reference>
<reference key="5">
    <citation type="journal article" date="2014" name="Plant Physiol.">
        <title>Functional and evolutionary analysis of the CASPARIAN STRIP MEMBRANE DOMAIN PROTEIN family.</title>
        <authorList>
            <person name="Roppolo D."/>
            <person name="Boeckmann B."/>
            <person name="Pfister A."/>
            <person name="Boutet E."/>
            <person name="Rubio M.C."/>
            <person name="Denervaud-Tendon V."/>
            <person name="Vermeer J.E."/>
            <person name="Gheyselinck J."/>
            <person name="Xenarios I."/>
            <person name="Geldner N."/>
        </authorList>
    </citation>
    <scope>GENE FAMILY</scope>
    <scope>NOMENCLATURE</scope>
</reference>
<keyword id="KW-0007">Acetylation</keyword>
<keyword id="KW-1003">Cell membrane</keyword>
<keyword id="KW-0472">Membrane</keyword>
<keyword id="KW-1185">Reference proteome</keyword>
<keyword id="KW-0812">Transmembrane</keyword>
<keyword id="KW-1133">Transmembrane helix</keyword>
<feature type="initiator methionine" description="Removed" evidence="2">
    <location>
        <position position="1"/>
    </location>
</feature>
<feature type="chain" id="PRO_0000308687" description="CASP-like protein 1B1">
    <location>
        <begin position="2"/>
        <end position="197"/>
    </location>
</feature>
<feature type="topological domain" description="Cytoplasmic" evidence="3">
    <location>
        <begin position="2"/>
        <end position="17"/>
    </location>
</feature>
<feature type="transmembrane region" description="Helical" evidence="3">
    <location>
        <begin position="18"/>
        <end position="38"/>
    </location>
</feature>
<feature type="topological domain" description="Extracellular" evidence="3">
    <location>
        <begin position="39"/>
        <end position="69"/>
    </location>
</feature>
<feature type="transmembrane region" description="Helical" evidence="3">
    <location>
        <begin position="70"/>
        <end position="90"/>
    </location>
</feature>
<feature type="topological domain" description="Cytoplasmic" evidence="3">
    <location>
        <begin position="91"/>
        <end position="106"/>
    </location>
</feature>
<feature type="transmembrane region" description="Helical" evidence="3">
    <location>
        <begin position="107"/>
        <end position="127"/>
    </location>
</feature>
<feature type="topological domain" description="Extracellular" evidence="3">
    <location>
        <begin position="128"/>
        <end position="156"/>
    </location>
</feature>
<feature type="transmembrane region" description="Helical" evidence="3">
    <location>
        <begin position="157"/>
        <end position="177"/>
    </location>
</feature>
<feature type="topological domain" description="Cytoplasmic" evidence="3">
    <location>
        <begin position="178"/>
        <end position="197"/>
    </location>
</feature>
<feature type="modified residue" description="N-acetylalanine" evidence="2">
    <location>
        <position position="2"/>
    </location>
</feature>
<feature type="sequence conflict" description="In Ref. 3; AAM63034." evidence="4" ref="3">
    <original>TLA</original>
    <variation>ALP</variation>
    <location>
        <begin position="7"/>
        <end position="9"/>
    </location>
</feature>
<feature type="sequence conflict" description="In Ref. 3; AAM63034." evidence="4" ref="3">
    <original>F</original>
    <variation>L</variation>
    <location>
        <position position="27"/>
    </location>
</feature>
<feature type="sequence conflict" description="In Ref. 3; AAM63034." evidence="4" ref="3">
    <original>I</original>
    <variation>V</variation>
    <location>
        <position position="47"/>
    </location>
</feature>
<proteinExistence type="evidence at protein level"/>
<dbReference type="EMBL" id="AB017065">
    <property type="protein sequence ID" value="BAB09162.1"/>
    <property type="molecule type" value="Genomic_DNA"/>
</dbReference>
<dbReference type="EMBL" id="CP002688">
    <property type="protein sequence ID" value="AED95122.1"/>
    <property type="molecule type" value="Genomic_DNA"/>
</dbReference>
<dbReference type="EMBL" id="AY065079">
    <property type="protein sequence ID" value="AAL38255.1"/>
    <property type="molecule type" value="mRNA"/>
</dbReference>
<dbReference type="EMBL" id="AY114543">
    <property type="protein sequence ID" value="AAM47862.1"/>
    <property type="molecule type" value="mRNA"/>
</dbReference>
<dbReference type="EMBL" id="AY085818">
    <property type="protein sequence ID" value="AAM63034.1"/>
    <property type="molecule type" value="mRNA"/>
</dbReference>
<dbReference type="RefSeq" id="NP_199268.1">
    <property type="nucleotide sequence ID" value="NM_123822.4"/>
</dbReference>
<dbReference type="SMR" id="Q9FI10"/>
<dbReference type="BioGRID" id="19732">
    <property type="interactions" value="5"/>
</dbReference>
<dbReference type="FunCoup" id="Q9FI10">
    <property type="interactions" value="354"/>
</dbReference>
<dbReference type="IntAct" id="Q9FI10">
    <property type="interactions" value="3"/>
</dbReference>
<dbReference type="STRING" id="3702.Q9FI10"/>
<dbReference type="PaxDb" id="3702-AT5G44550.1"/>
<dbReference type="ProteomicsDB" id="222689"/>
<dbReference type="EnsemblPlants" id="AT5G44550.1">
    <property type="protein sequence ID" value="AT5G44550.1"/>
    <property type="gene ID" value="AT5G44550"/>
</dbReference>
<dbReference type="GeneID" id="834482"/>
<dbReference type="Gramene" id="AT5G44550.1">
    <property type="protein sequence ID" value="AT5G44550.1"/>
    <property type="gene ID" value="AT5G44550"/>
</dbReference>
<dbReference type="KEGG" id="ath:AT5G44550"/>
<dbReference type="Araport" id="AT5G44550"/>
<dbReference type="TAIR" id="AT5G44550">
    <property type="gene designation" value="CASPL1B1"/>
</dbReference>
<dbReference type="eggNOG" id="ENOG502RYH6">
    <property type="taxonomic scope" value="Eukaryota"/>
</dbReference>
<dbReference type="HOGENOM" id="CLU_066104_1_0_1"/>
<dbReference type="InParanoid" id="Q9FI10"/>
<dbReference type="OMA" id="KCCSTTA"/>
<dbReference type="PhylomeDB" id="Q9FI10"/>
<dbReference type="PRO" id="PR:Q9FI10"/>
<dbReference type="Proteomes" id="UP000006548">
    <property type="component" value="Chromosome 5"/>
</dbReference>
<dbReference type="ExpressionAtlas" id="Q9FI10">
    <property type="expression patterns" value="baseline and differential"/>
</dbReference>
<dbReference type="GO" id="GO:0005886">
    <property type="term" value="C:plasma membrane"/>
    <property type="evidence" value="ECO:0007669"/>
    <property type="project" value="UniProtKB-SubCell"/>
</dbReference>
<dbReference type="InterPro" id="IPR006459">
    <property type="entry name" value="CASP/CASPL"/>
</dbReference>
<dbReference type="InterPro" id="IPR006702">
    <property type="entry name" value="CASP_dom"/>
</dbReference>
<dbReference type="InterPro" id="IPR044173">
    <property type="entry name" value="CASPL"/>
</dbReference>
<dbReference type="NCBIfam" id="TIGR01569">
    <property type="entry name" value="A_tha_TIGR01569"/>
    <property type="match status" value="1"/>
</dbReference>
<dbReference type="PANTHER" id="PTHR36488">
    <property type="entry name" value="CASP-LIKE PROTEIN 1U1"/>
    <property type="match status" value="1"/>
</dbReference>
<dbReference type="PANTHER" id="PTHR36488:SF8">
    <property type="entry name" value="CASP-LIKE PROTEIN 1U1"/>
    <property type="match status" value="1"/>
</dbReference>
<dbReference type="Pfam" id="PF04535">
    <property type="entry name" value="CASP_dom"/>
    <property type="match status" value="1"/>
</dbReference>
<accession>Q9FI10</accession>
<accession>Q8LDT2</accession>
<protein>
    <recommendedName>
        <fullName>CASP-like protein 1B1</fullName>
        <shortName>AtCASPL1B1</shortName>
    </recommendedName>
</protein>
<evidence type="ECO:0000250" key="1"/>
<evidence type="ECO:0000250" key="2">
    <source>
        <dbReference type="UniProtKB" id="Q9SQU2"/>
    </source>
</evidence>
<evidence type="ECO:0000255" key="3"/>
<evidence type="ECO:0000305" key="4"/>
<sequence>MAVSKLTLAATSGKSCKILLGLRLLAFSATLSAAIVMGLNKETKTFIVGKVGNTPIQATFTAKFDHTPAFVFFVVANAMVSFHNLLMIALQIFGGKMEFTGFRLLSVAILDMLNVTLISAAANAAAFMAEVGKNGNKHARWDKICDRFATYCDHGAGALIAAFAGVILMLIISAASISRLVQPNKCCSTTASPSVVP</sequence>
<comment type="subunit">
    <text evidence="1">Homodimer and heterodimers.</text>
</comment>
<comment type="interaction">
    <interactant intactId="EBI-4440466">
        <id>Q9FI10</id>
    </interactant>
    <interactant intactId="EBI-2319707">
        <id>Q94F58</id>
        <label>NAC089</label>
    </interactant>
    <organismsDiffer>false</organismsDiffer>
    <experiments>2</experiments>
</comment>
<comment type="subcellular location">
    <subcellularLocation>
        <location evidence="1">Cell membrane</location>
        <topology evidence="1">Multi-pass membrane protein</topology>
    </subcellularLocation>
</comment>
<comment type="similarity">
    <text evidence="4">Belongs to the Casparian strip membrane proteins (CASP) family.</text>
</comment>
<organism>
    <name type="scientific">Arabidopsis thaliana</name>
    <name type="common">Mouse-ear cress</name>
    <dbReference type="NCBI Taxonomy" id="3702"/>
    <lineage>
        <taxon>Eukaryota</taxon>
        <taxon>Viridiplantae</taxon>
        <taxon>Streptophyta</taxon>
        <taxon>Embryophyta</taxon>
        <taxon>Tracheophyta</taxon>
        <taxon>Spermatophyta</taxon>
        <taxon>Magnoliopsida</taxon>
        <taxon>eudicotyledons</taxon>
        <taxon>Gunneridae</taxon>
        <taxon>Pentapetalae</taxon>
        <taxon>rosids</taxon>
        <taxon>malvids</taxon>
        <taxon>Brassicales</taxon>
        <taxon>Brassicaceae</taxon>
        <taxon>Camelineae</taxon>
        <taxon>Arabidopsis</taxon>
    </lineage>
</organism>
<gene>
    <name type="ordered locus">At5g44550</name>
    <name type="ORF">MFC16.23</name>
</gene>
<name>CSPLW_ARATH</name>